<sequence>MLLCIDCGNTNTVFSIWDGESWLCTMRTSTHHSRTADAYFTWFSTLLGHYGIDPQIDDVIISSTVPRVVFNLRVFCDRFFNLRPLVVGKPDCALPMEPRVDFGTGVGPDRLANAVGAFARHGGDCVVVDFGTATNFDVVAEDGAYVGGVIAPGVNLSLEALALGAAALPHVDITKPDAVIGTNTVACIQSGVFWGYVGLIEGITTRIKAEYGKPMKVIGTGGLAPLFAQGEVLFDTVEDDLTMYGLTVIHKYNKDKNPS</sequence>
<protein>
    <recommendedName>
        <fullName evidence="1">Type III pantothenate kinase</fullName>
        <ecNumber evidence="1">2.7.1.33</ecNumber>
    </recommendedName>
    <alternativeName>
        <fullName evidence="1">PanK-III</fullName>
    </alternativeName>
    <alternativeName>
        <fullName evidence="1">Pantothenic acid kinase</fullName>
    </alternativeName>
</protein>
<reference key="1">
    <citation type="submission" date="2006-02" db="EMBL/GenBank/DDBJ databases">
        <title>Complete sequence of chromosome of Jannaschia sp. CCS1.</title>
        <authorList>
            <consortium name="US DOE Joint Genome Institute"/>
            <person name="Copeland A."/>
            <person name="Lucas S."/>
            <person name="Lapidus A."/>
            <person name="Barry K."/>
            <person name="Detter J.C."/>
            <person name="Glavina del Rio T."/>
            <person name="Hammon N."/>
            <person name="Israni S."/>
            <person name="Pitluck S."/>
            <person name="Brettin T."/>
            <person name="Bruce D."/>
            <person name="Han C."/>
            <person name="Tapia R."/>
            <person name="Gilna P."/>
            <person name="Chertkov O."/>
            <person name="Saunders E."/>
            <person name="Schmutz J."/>
            <person name="Larimer F."/>
            <person name="Land M."/>
            <person name="Kyrpides N."/>
            <person name="Lykidis A."/>
            <person name="Moran M.A."/>
            <person name="Belas R."/>
            <person name="Ye W."/>
            <person name="Buchan A."/>
            <person name="Gonzalez J.M."/>
            <person name="Schell M.A."/>
            <person name="Richardson P."/>
        </authorList>
    </citation>
    <scope>NUCLEOTIDE SEQUENCE [LARGE SCALE GENOMIC DNA]</scope>
    <source>
        <strain>CCS1</strain>
    </source>
</reference>
<organism>
    <name type="scientific">Jannaschia sp. (strain CCS1)</name>
    <dbReference type="NCBI Taxonomy" id="290400"/>
    <lineage>
        <taxon>Bacteria</taxon>
        <taxon>Pseudomonadati</taxon>
        <taxon>Pseudomonadota</taxon>
        <taxon>Alphaproteobacteria</taxon>
        <taxon>Rhodobacterales</taxon>
        <taxon>Roseobacteraceae</taxon>
        <taxon>Jannaschia</taxon>
    </lineage>
</organism>
<dbReference type="EC" id="2.7.1.33" evidence="1"/>
<dbReference type="EMBL" id="CP000264">
    <property type="protein sequence ID" value="ABD54115.1"/>
    <property type="molecule type" value="Genomic_DNA"/>
</dbReference>
<dbReference type="RefSeq" id="WP_011454322.1">
    <property type="nucleotide sequence ID" value="NC_007802.1"/>
</dbReference>
<dbReference type="SMR" id="Q28T47"/>
<dbReference type="STRING" id="290400.Jann_1198"/>
<dbReference type="KEGG" id="jan:Jann_1198"/>
<dbReference type="eggNOG" id="COG1521">
    <property type="taxonomic scope" value="Bacteria"/>
</dbReference>
<dbReference type="HOGENOM" id="CLU_066627_1_0_5"/>
<dbReference type="OrthoDB" id="9804707at2"/>
<dbReference type="UniPathway" id="UPA00241">
    <property type="reaction ID" value="UER00352"/>
</dbReference>
<dbReference type="Proteomes" id="UP000008326">
    <property type="component" value="Chromosome"/>
</dbReference>
<dbReference type="GO" id="GO:0005737">
    <property type="term" value="C:cytoplasm"/>
    <property type="evidence" value="ECO:0007669"/>
    <property type="project" value="UniProtKB-SubCell"/>
</dbReference>
<dbReference type="GO" id="GO:0005524">
    <property type="term" value="F:ATP binding"/>
    <property type="evidence" value="ECO:0007669"/>
    <property type="project" value="UniProtKB-UniRule"/>
</dbReference>
<dbReference type="GO" id="GO:0046872">
    <property type="term" value="F:metal ion binding"/>
    <property type="evidence" value="ECO:0007669"/>
    <property type="project" value="UniProtKB-KW"/>
</dbReference>
<dbReference type="GO" id="GO:0004594">
    <property type="term" value="F:pantothenate kinase activity"/>
    <property type="evidence" value="ECO:0007669"/>
    <property type="project" value="UniProtKB-UniRule"/>
</dbReference>
<dbReference type="GO" id="GO:0015937">
    <property type="term" value="P:coenzyme A biosynthetic process"/>
    <property type="evidence" value="ECO:0007669"/>
    <property type="project" value="UniProtKB-UniRule"/>
</dbReference>
<dbReference type="CDD" id="cd24015">
    <property type="entry name" value="ASKHA_NBD_PanK-III"/>
    <property type="match status" value="1"/>
</dbReference>
<dbReference type="Gene3D" id="3.30.420.40">
    <property type="match status" value="2"/>
</dbReference>
<dbReference type="HAMAP" id="MF_01274">
    <property type="entry name" value="Pantothen_kinase_3"/>
    <property type="match status" value="1"/>
</dbReference>
<dbReference type="InterPro" id="IPR043129">
    <property type="entry name" value="ATPase_NBD"/>
</dbReference>
<dbReference type="InterPro" id="IPR004619">
    <property type="entry name" value="Type_III_PanK"/>
</dbReference>
<dbReference type="NCBIfam" id="TIGR00671">
    <property type="entry name" value="baf"/>
    <property type="match status" value="1"/>
</dbReference>
<dbReference type="NCBIfam" id="NF009844">
    <property type="entry name" value="PRK13318.1-2"/>
    <property type="match status" value="1"/>
</dbReference>
<dbReference type="NCBIfam" id="NF009855">
    <property type="entry name" value="PRK13321.1"/>
    <property type="match status" value="1"/>
</dbReference>
<dbReference type="PANTHER" id="PTHR34265">
    <property type="entry name" value="TYPE III PANTOTHENATE KINASE"/>
    <property type="match status" value="1"/>
</dbReference>
<dbReference type="PANTHER" id="PTHR34265:SF1">
    <property type="entry name" value="TYPE III PANTOTHENATE KINASE"/>
    <property type="match status" value="1"/>
</dbReference>
<dbReference type="Pfam" id="PF03309">
    <property type="entry name" value="Pan_kinase"/>
    <property type="match status" value="1"/>
</dbReference>
<dbReference type="SUPFAM" id="SSF53067">
    <property type="entry name" value="Actin-like ATPase domain"/>
    <property type="match status" value="2"/>
</dbReference>
<comment type="function">
    <text evidence="1">Catalyzes the phosphorylation of pantothenate (Pan), the first step in CoA biosynthesis.</text>
</comment>
<comment type="catalytic activity">
    <reaction evidence="1">
        <text>(R)-pantothenate + ATP = (R)-4'-phosphopantothenate + ADP + H(+)</text>
        <dbReference type="Rhea" id="RHEA:16373"/>
        <dbReference type="ChEBI" id="CHEBI:10986"/>
        <dbReference type="ChEBI" id="CHEBI:15378"/>
        <dbReference type="ChEBI" id="CHEBI:29032"/>
        <dbReference type="ChEBI" id="CHEBI:30616"/>
        <dbReference type="ChEBI" id="CHEBI:456216"/>
        <dbReference type="EC" id="2.7.1.33"/>
    </reaction>
</comment>
<comment type="cofactor">
    <cofactor evidence="1">
        <name>NH4(+)</name>
        <dbReference type="ChEBI" id="CHEBI:28938"/>
    </cofactor>
    <cofactor evidence="1">
        <name>K(+)</name>
        <dbReference type="ChEBI" id="CHEBI:29103"/>
    </cofactor>
    <text evidence="1">A monovalent cation. Ammonium or potassium.</text>
</comment>
<comment type="pathway">
    <text evidence="1">Cofactor biosynthesis; coenzyme A biosynthesis; CoA from (R)-pantothenate: step 1/5.</text>
</comment>
<comment type="subunit">
    <text evidence="1">Homodimer.</text>
</comment>
<comment type="subcellular location">
    <subcellularLocation>
        <location evidence="1">Cytoplasm</location>
    </subcellularLocation>
</comment>
<comment type="similarity">
    <text evidence="1">Belongs to the type III pantothenate kinase family.</text>
</comment>
<keyword id="KW-0067">ATP-binding</keyword>
<keyword id="KW-0173">Coenzyme A biosynthesis</keyword>
<keyword id="KW-0963">Cytoplasm</keyword>
<keyword id="KW-0418">Kinase</keyword>
<keyword id="KW-0479">Metal-binding</keyword>
<keyword id="KW-0547">Nucleotide-binding</keyword>
<keyword id="KW-0630">Potassium</keyword>
<keyword id="KW-1185">Reference proteome</keyword>
<keyword id="KW-0808">Transferase</keyword>
<feature type="chain" id="PRO_0000267549" description="Type III pantothenate kinase">
    <location>
        <begin position="1"/>
        <end position="259"/>
    </location>
</feature>
<feature type="active site" description="Proton acceptor" evidence="1">
    <location>
        <position position="109"/>
    </location>
</feature>
<feature type="binding site" evidence="1">
    <location>
        <begin position="6"/>
        <end position="13"/>
    </location>
    <ligand>
        <name>ATP</name>
        <dbReference type="ChEBI" id="CHEBI:30616"/>
    </ligand>
</feature>
<feature type="binding site" evidence="1">
    <location>
        <begin position="107"/>
        <end position="110"/>
    </location>
    <ligand>
        <name>substrate</name>
    </ligand>
</feature>
<feature type="binding site" evidence="1">
    <location>
        <position position="129"/>
    </location>
    <ligand>
        <name>K(+)</name>
        <dbReference type="ChEBI" id="CHEBI:29103"/>
    </ligand>
</feature>
<feature type="binding site" evidence="1">
    <location>
        <position position="132"/>
    </location>
    <ligand>
        <name>ATP</name>
        <dbReference type="ChEBI" id="CHEBI:30616"/>
    </ligand>
</feature>
<feature type="binding site" evidence="1">
    <location>
        <position position="184"/>
    </location>
    <ligand>
        <name>substrate</name>
    </ligand>
</feature>
<accession>Q28T47</accession>
<proteinExistence type="inferred from homology"/>
<gene>
    <name evidence="1" type="primary">coaX</name>
    <name type="ordered locus">Jann_1198</name>
</gene>
<evidence type="ECO:0000255" key="1">
    <source>
        <dbReference type="HAMAP-Rule" id="MF_01274"/>
    </source>
</evidence>
<name>COAX_JANSC</name>